<dbReference type="EMBL" id="CP000901">
    <property type="protein sequence ID" value="ABX87885.1"/>
    <property type="molecule type" value="Genomic_DNA"/>
</dbReference>
<dbReference type="RefSeq" id="WP_002211688.1">
    <property type="nucleotide sequence ID" value="NZ_CP009935.1"/>
</dbReference>
<dbReference type="SMR" id="A9R9D5"/>
<dbReference type="GeneID" id="96665563"/>
<dbReference type="KEGG" id="ypg:YpAngola_A2363"/>
<dbReference type="PATRIC" id="fig|349746.12.peg.3376"/>
<dbReference type="GO" id="GO:0005737">
    <property type="term" value="C:cytoplasm"/>
    <property type="evidence" value="ECO:0007669"/>
    <property type="project" value="UniProtKB-SubCell"/>
</dbReference>
<dbReference type="GO" id="GO:0003677">
    <property type="term" value="F:DNA binding"/>
    <property type="evidence" value="ECO:0007669"/>
    <property type="project" value="UniProtKB-KW"/>
</dbReference>
<dbReference type="GO" id="GO:0003700">
    <property type="term" value="F:DNA-binding transcription factor activity"/>
    <property type="evidence" value="ECO:0007669"/>
    <property type="project" value="UniProtKB-UniRule"/>
</dbReference>
<dbReference type="GO" id="GO:0000062">
    <property type="term" value="F:fatty-acyl-CoA binding"/>
    <property type="evidence" value="ECO:0007669"/>
    <property type="project" value="InterPro"/>
</dbReference>
<dbReference type="GO" id="GO:0006631">
    <property type="term" value="P:fatty acid metabolic process"/>
    <property type="evidence" value="ECO:0007669"/>
    <property type="project" value="UniProtKB-KW"/>
</dbReference>
<dbReference type="GO" id="GO:0019217">
    <property type="term" value="P:regulation of fatty acid metabolic process"/>
    <property type="evidence" value="ECO:0007669"/>
    <property type="project" value="UniProtKB-UniRule"/>
</dbReference>
<dbReference type="CDD" id="cd07377">
    <property type="entry name" value="WHTH_GntR"/>
    <property type="match status" value="1"/>
</dbReference>
<dbReference type="FunFam" id="1.10.10.10:FF:000036">
    <property type="entry name" value="Fatty acid metabolism regulator protein"/>
    <property type="match status" value="1"/>
</dbReference>
<dbReference type="Gene3D" id="1.20.120.530">
    <property type="entry name" value="GntR ligand-binding domain-like"/>
    <property type="match status" value="1"/>
</dbReference>
<dbReference type="Gene3D" id="1.10.10.10">
    <property type="entry name" value="Winged helix-like DNA-binding domain superfamily/Winged helix DNA-binding domain"/>
    <property type="match status" value="1"/>
</dbReference>
<dbReference type="HAMAP" id="MF_00696">
    <property type="entry name" value="HTH_FadR"/>
    <property type="match status" value="1"/>
</dbReference>
<dbReference type="InterPro" id="IPR014178">
    <property type="entry name" value="FA-response_TF_FadR"/>
</dbReference>
<dbReference type="InterPro" id="IPR028374">
    <property type="entry name" value="FadR_C"/>
</dbReference>
<dbReference type="InterPro" id="IPR008920">
    <property type="entry name" value="TF_FadR/GntR_C"/>
</dbReference>
<dbReference type="InterPro" id="IPR000524">
    <property type="entry name" value="Tscrpt_reg_HTH_GntR"/>
</dbReference>
<dbReference type="InterPro" id="IPR036388">
    <property type="entry name" value="WH-like_DNA-bd_sf"/>
</dbReference>
<dbReference type="InterPro" id="IPR036390">
    <property type="entry name" value="WH_DNA-bd_sf"/>
</dbReference>
<dbReference type="NCBIfam" id="TIGR02812">
    <property type="entry name" value="fadR_gamma"/>
    <property type="match status" value="1"/>
</dbReference>
<dbReference type="NCBIfam" id="NF003444">
    <property type="entry name" value="PRK04984.1"/>
    <property type="match status" value="1"/>
</dbReference>
<dbReference type="PANTHER" id="PTHR43537:SF52">
    <property type="entry name" value="FATTY ACID METABOLISM REGULATOR PROTEIN"/>
    <property type="match status" value="1"/>
</dbReference>
<dbReference type="PANTHER" id="PTHR43537">
    <property type="entry name" value="TRANSCRIPTIONAL REGULATOR, GNTR FAMILY"/>
    <property type="match status" value="1"/>
</dbReference>
<dbReference type="Pfam" id="PF07840">
    <property type="entry name" value="FadR_C"/>
    <property type="match status" value="1"/>
</dbReference>
<dbReference type="Pfam" id="PF00392">
    <property type="entry name" value="GntR"/>
    <property type="match status" value="1"/>
</dbReference>
<dbReference type="PRINTS" id="PR00035">
    <property type="entry name" value="HTHGNTR"/>
</dbReference>
<dbReference type="SMART" id="SM00345">
    <property type="entry name" value="HTH_GNTR"/>
    <property type="match status" value="1"/>
</dbReference>
<dbReference type="SUPFAM" id="SSF48008">
    <property type="entry name" value="GntR ligand-binding domain-like"/>
    <property type="match status" value="1"/>
</dbReference>
<dbReference type="SUPFAM" id="SSF46785">
    <property type="entry name" value="Winged helix' DNA-binding domain"/>
    <property type="match status" value="1"/>
</dbReference>
<dbReference type="PROSITE" id="PS50949">
    <property type="entry name" value="HTH_GNTR"/>
    <property type="match status" value="1"/>
</dbReference>
<comment type="function">
    <text evidence="1">Multifunctional regulator of fatty acid metabolism.</text>
</comment>
<comment type="subunit">
    <text evidence="1">Homodimer.</text>
</comment>
<comment type="subcellular location">
    <subcellularLocation>
        <location evidence="1">Cytoplasm</location>
    </subcellularLocation>
</comment>
<reference key="1">
    <citation type="journal article" date="2010" name="J. Bacteriol.">
        <title>Genome sequence of the deep-rooted Yersinia pestis strain Angola reveals new insights into the evolution and pangenome of the plague bacterium.</title>
        <authorList>
            <person name="Eppinger M."/>
            <person name="Worsham P.L."/>
            <person name="Nikolich M.P."/>
            <person name="Riley D.R."/>
            <person name="Sebastian Y."/>
            <person name="Mou S."/>
            <person name="Achtman M."/>
            <person name="Lindler L.E."/>
            <person name="Ravel J."/>
        </authorList>
    </citation>
    <scope>NUCLEOTIDE SEQUENCE [LARGE SCALE GENOMIC DNA]</scope>
    <source>
        <strain>Angola</strain>
    </source>
</reference>
<evidence type="ECO:0000255" key="1">
    <source>
        <dbReference type="HAMAP-Rule" id="MF_00696"/>
    </source>
</evidence>
<name>FADR_YERPG</name>
<proteinExistence type="inferred from homology"/>
<accession>A9R9D5</accession>
<gene>
    <name evidence="1" type="primary">fadR</name>
    <name type="ordered locus">YpAngola_A2363</name>
</gene>
<keyword id="KW-0010">Activator</keyword>
<keyword id="KW-0963">Cytoplasm</keyword>
<keyword id="KW-0238">DNA-binding</keyword>
<keyword id="KW-0276">Fatty acid metabolism</keyword>
<keyword id="KW-0443">Lipid metabolism</keyword>
<keyword id="KW-0678">Repressor</keyword>
<keyword id="KW-0804">Transcription</keyword>
<keyword id="KW-0805">Transcription regulation</keyword>
<protein>
    <recommendedName>
        <fullName evidence="1">Fatty acid metabolism regulator protein</fullName>
    </recommendedName>
</protein>
<feature type="chain" id="PRO_1000132334" description="Fatty acid metabolism regulator protein">
    <location>
        <begin position="1"/>
        <end position="239"/>
    </location>
</feature>
<feature type="domain" description="HTH gntR-type" evidence="1">
    <location>
        <begin position="6"/>
        <end position="74"/>
    </location>
</feature>
<feature type="DNA-binding region" description="H-T-H motif" evidence="1">
    <location>
        <begin position="34"/>
        <end position="53"/>
    </location>
</feature>
<sequence length="239" mass="26902">MVIKAQSPAGFAEEYIIESIWNNRFPPGSILPAERELSELIGVTRTTLREVLQRLARDGWLTIQHGKPTKVNNFWETSGLNILETLARLDHDSVPQLIDNLLAVRTNIATIFVRTAIRHHPEKAQEILARAKTVDDNAEAFTALDYGIFRGLAFASGNPIYGLILNGLKGLYTRVGRYYFSNPEARKLALTFYNKLSTLCDTESYDQVLECLRTYGKESGAIWHSMQGTMPSDLAEARR</sequence>
<organism>
    <name type="scientific">Yersinia pestis bv. Antiqua (strain Angola)</name>
    <dbReference type="NCBI Taxonomy" id="349746"/>
    <lineage>
        <taxon>Bacteria</taxon>
        <taxon>Pseudomonadati</taxon>
        <taxon>Pseudomonadota</taxon>
        <taxon>Gammaproteobacteria</taxon>
        <taxon>Enterobacterales</taxon>
        <taxon>Yersiniaceae</taxon>
        <taxon>Yersinia</taxon>
    </lineage>
</organism>